<gene>
    <name type="primary">Aldh3b1</name>
    <name type="synonym">Aldh7</name>
</gene>
<name>AL3B1_MOUSE</name>
<reference key="1">
    <citation type="journal article" date="2004" name="Genome Res.">
        <title>The status, quality, and expansion of the NIH full-length cDNA project: the Mammalian Gene Collection (MGC).</title>
        <authorList>
            <consortium name="The MGC Project Team"/>
        </authorList>
    </citation>
    <scope>NUCLEOTIDE SEQUENCE [LARGE SCALE MRNA]</scope>
    <source>
        <tissue>Olfactory epithelium</tissue>
    </source>
</reference>
<reference key="2">
    <citation type="submission" date="2001-03" db="EMBL/GenBank/DDBJ databases">
        <authorList>
            <person name="Vasiliou V."/>
            <person name="Pappa A."/>
            <person name="Manzer R."/>
        </authorList>
    </citation>
    <scope>NUCLEOTIDE SEQUENCE [MRNA] OF 20-468</scope>
</reference>
<reference key="3">
    <citation type="journal article" date="2005" name="Science">
        <title>The transcriptional landscape of the mammalian genome.</title>
        <authorList>
            <person name="Carninci P."/>
            <person name="Kasukawa T."/>
            <person name="Katayama S."/>
            <person name="Gough J."/>
            <person name="Frith M.C."/>
            <person name="Maeda N."/>
            <person name="Oyama R."/>
            <person name="Ravasi T."/>
            <person name="Lenhard B."/>
            <person name="Wells C."/>
            <person name="Kodzius R."/>
            <person name="Shimokawa K."/>
            <person name="Bajic V.B."/>
            <person name="Brenner S.E."/>
            <person name="Batalov S."/>
            <person name="Forrest A.R."/>
            <person name="Zavolan M."/>
            <person name="Davis M.J."/>
            <person name="Wilming L.G."/>
            <person name="Aidinis V."/>
            <person name="Allen J.E."/>
            <person name="Ambesi-Impiombato A."/>
            <person name="Apweiler R."/>
            <person name="Aturaliya R.N."/>
            <person name="Bailey T.L."/>
            <person name="Bansal M."/>
            <person name="Baxter L."/>
            <person name="Beisel K.W."/>
            <person name="Bersano T."/>
            <person name="Bono H."/>
            <person name="Chalk A.M."/>
            <person name="Chiu K.P."/>
            <person name="Choudhary V."/>
            <person name="Christoffels A."/>
            <person name="Clutterbuck D.R."/>
            <person name="Crowe M.L."/>
            <person name="Dalla E."/>
            <person name="Dalrymple B.P."/>
            <person name="de Bono B."/>
            <person name="Della Gatta G."/>
            <person name="di Bernardo D."/>
            <person name="Down T."/>
            <person name="Engstrom P."/>
            <person name="Fagiolini M."/>
            <person name="Faulkner G."/>
            <person name="Fletcher C.F."/>
            <person name="Fukushima T."/>
            <person name="Furuno M."/>
            <person name="Futaki S."/>
            <person name="Gariboldi M."/>
            <person name="Georgii-Hemming P."/>
            <person name="Gingeras T.R."/>
            <person name="Gojobori T."/>
            <person name="Green R.E."/>
            <person name="Gustincich S."/>
            <person name="Harbers M."/>
            <person name="Hayashi Y."/>
            <person name="Hensch T.K."/>
            <person name="Hirokawa N."/>
            <person name="Hill D."/>
            <person name="Huminiecki L."/>
            <person name="Iacono M."/>
            <person name="Ikeo K."/>
            <person name="Iwama A."/>
            <person name="Ishikawa T."/>
            <person name="Jakt M."/>
            <person name="Kanapin A."/>
            <person name="Katoh M."/>
            <person name="Kawasawa Y."/>
            <person name="Kelso J."/>
            <person name="Kitamura H."/>
            <person name="Kitano H."/>
            <person name="Kollias G."/>
            <person name="Krishnan S.P."/>
            <person name="Kruger A."/>
            <person name="Kummerfeld S.K."/>
            <person name="Kurochkin I.V."/>
            <person name="Lareau L.F."/>
            <person name="Lazarevic D."/>
            <person name="Lipovich L."/>
            <person name="Liu J."/>
            <person name="Liuni S."/>
            <person name="McWilliam S."/>
            <person name="Madan Babu M."/>
            <person name="Madera M."/>
            <person name="Marchionni L."/>
            <person name="Matsuda H."/>
            <person name="Matsuzawa S."/>
            <person name="Miki H."/>
            <person name="Mignone F."/>
            <person name="Miyake S."/>
            <person name="Morris K."/>
            <person name="Mottagui-Tabar S."/>
            <person name="Mulder N."/>
            <person name="Nakano N."/>
            <person name="Nakauchi H."/>
            <person name="Ng P."/>
            <person name="Nilsson R."/>
            <person name="Nishiguchi S."/>
            <person name="Nishikawa S."/>
            <person name="Nori F."/>
            <person name="Ohara O."/>
            <person name="Okazaki Y."/>
            <person name="Orlando V."/>
            <person name="Pang K.C."/>
            <person name="Pavan W.J."/>
            <person name="Pavesi G."/>
            <person name="Pesole G."/>
            <person name="Petrovsky N."/>
            <person name="Piazza S."/>
            <person name="Reed J."/>
            <person name="Reid J.F."/>
            <person name="Ring B.Z."/>
            <person name="Ringwald M."/>
            <person name="Rost B."/>
            <person name="Ruan Y."/>
            <person name="Salzberg S.L."/>
            <person name="Sandelin A."/>
            <person name="Schneider C."/>
            <person name="Schoenbach C."/>
            <person name="Sekiguchi K."/>
            <person name="Semple C.A."/>
            <person name="Seno S."/>
            <person name="Sessa L."/>
            <person name="Sheng Y."/>
            <person name="Shibata Y."/>
            <person name="Shimada H."/>
            <person name="Shimada K."/>
            <person name="Silva D."/>
            <person name="Sinclair B."/>
            <person name="Sperling S."/>
            <person name="Stupka E."/>
            <person name="Sugiura K."/>
            <person name="Sultana R."/>
            <person name="Takenaka Y."/>
            <person name="Taki K."/>
            <person name="Tammoja K."/>
            <person name="Tan S.L."/>
            <person name="Tang S."/>
            <person name="Taylor M.S."/>
            <person name="Tegner J."/>
            <person name="Teichmann S.A."/>
            <person name="Ueda H.R."/>
            <person name="van Nimwegen E."/>
            <person name="Verardo R."/>
            <person name="Wei C.L."/>
            <person name="Yagi K."/>
            <person name="Yamanishi H."/>
            <person name="Zabarovsky E."/>
            <person name="Zhu S."/>
            <person name="Zimmer A."/>
            <person name="Hide W."/>
            <person name="Bult C."/>
            <person name="Grimmond S.M."/>
            <person name="Teasdale R.D."/>
            <person name="Liu E.T."/>
            <person name="Brusic V."/>
            <person name="Quackenbush J."/>
            <person name="Wahlestedt C."/>
            <person name="Mattick J.S."/>
            <person name="Hume D.A."/>
            <person name="Kai C."/>
            <person name="Sasaki D."/>
            <person name="Tomaru Y."/>
            <person name="Fukuda S."/>
            <person name="Kanamori-Katayama M."/>
            <person name="Suzuki M."/>
            <person name="Aoki J."/>
            <person name="Arakawa T."/>
            <person name="Iida J."/>
            <person name="Imamura K."/>
            <person name="Itoh M."/>
            <person name="Kato T."/>
            <person name="Kawaji H."/>
            <person name="Kawagashira N."/>
            <person name="Kawashima T."/>
            <person name="Kojima M."/>
            <person name="Kondo S."/>
            <person name="Konno H."/>
            <person name="Nakano K."/>
            <person name="Ninomiya N."/>
            <person name="Nishio T."/>
            <person name="Okada M."/>
            <person name="Plessy C."/>
            <person name="Shibata K."/>
            <person name="Shiraki T."/>
            <person name="Suzuki S."/>
            <person name="Tagami M."/>
            <person name="Waki K."/>
            <person name="Watahiki A."/>
            <person name="Okamura-Oho Y."/>
            <person name="Suzuki H."/>
            <person name="Kawai J."/>
            <person name="Hayashizaki Y."/>
        </authorList>
    </citation>
    <scope>NUCLEOTIDE SEQUENCE [LARGE SCALE MRNA] OF 331-468</scope>
    <source>
        <strain>C57BL/6J</strain>
        <tissue>Testis</tissue>
    </source>
</reference>
<reference key="4">
    <citation type="journal article" date="2007" name="Biochem. Biophys. Res. Commun.">
        <title>Expression and initial characterization of human ALDH3B1.</title>
        <authorList>
            <person name="Marchitti S.A."/>
            <person name="Orlicky D.J."/>
            <person name="Vasiliou V."/>
        </authorList>
    </citation>
    <scope>TISSUE SPECIFICITY</scope>
    <scope>FUNCTION</scope>
</reference>
<reference key="5">
    <citation type="journal article" date="2010" name="Cell">
        <title>A tissue-specific atlas of mouse protein phosphorylation and expression.</title>
        <authorList>
            <person name="Huttlin E.L."/>
            <person name="Jedrychowski M.P."/>
            <person name="Elias J.E."/>
            <person name="Goswami T."/>
            <person name="Rad R."/>
            <person name="Beausoleil S.A."/>
            <person name="Villen J."/>
            <person name="Haas W."/>
            <person name="Sowa M.E."/>
            <person name="Gygi S.P."/>
        </authorList>
    </citation>
    <scope>IDENTIFICATION BY MASS SPECTROMETRY [LARGE SCALE ANALYSIS]</scope>
    <source>
        <tissue>Lung</tissue>
        <tissue>Spleen</tissue>
    </source>
</reference>
<reference key="6">
    <citation type="journal article" date="2015" name="Biochem. J.">
        <title>Mouse aldehyde dehydrogenase ALDH3B2 is localized to lipid droplets via two C-terminal tryptophan residues and lipid modification.</title>
        <authorList>
            <person name="Kitamura T."/>
            <person name="Takagi S."/>
            <person name="Naganuma T."/>
            <person name="Kihara A."/>
        </authorList>
    </citation>
    <scope>FUNCTION</scope>
    <scope>CATALYTIC ACTIVITY</scope>
    <scope>SUBCELLULAR LOCATION</scope>
    <scope>ISOPRENYLATION</scope>
    <scope>PALMITOYLATION AT CYS-462 AND CYS-463</scope>
    <scope>MUTAGENESIS OF CYS-462; CYS-463 AND 462-CYS-SER-463</scope>
</reference>
<feature type="chain" id="PRO_0000056482" description="Aldehyde dehydrogenase family 3 member B1">
    <location>
        <begin position="1"/>
        <end position="465"/>
    </location>
</feature>
<feature type="propeptide" id="PRO_0000424194" description="Removed in mature form" evidence="5">
    <location>
        <begin position="466"/>
        <end position="468"/>
    </location>
</feature>
<feature type="active site" evidence="1">
    <location>
        <position position="210"/>
    </location>
</feature>
<feature type="active site" evidence="1">
    <location>
        <position position="244"/>
    </location>
</feature>
<feature type="binding site" evidence="1">
    <location>
        <begin position="188"/>
        <end position="193"/>
    </location>
    <ligand>
        <name>NAD(+)</name>
        <dbReference type="ChEBI" id="CHEBI:57540"/>
    </ligand>
</feature>
<feature type="modified residue" description="N-acetylmethionine" evidence="2">
    <location>
        <position position="1"/>
    </location>
</feature>
<feature type="modified residue" description="Cysteine methyl ester" evidence="5">
    <location>
        <position position="465"/>
    </location>
</feature>
<feature type="lipid moiety-binding region" description="S-palmitoyl cysteine" evidence="4">
    <location>
        <position position="462"/>
    </location>
</feature>
<feature type="lipid moiety-binding region" description="S-palmitoyl cysteine" evidence="4">
    <location>
        <position position="463"/>
    </location>
</feature>
<feature type="lipid moiety-binding region" description="S-geranylgeranyl cysteine" evidence="2">
    <location>
        <position position="465"/>
    </location>
</feature>
<feature type="mutagenesis site" description="Abolishes palmitoylation." evidence="4">
    <original>CC</original>
    <variation>SS</variation>
    <location>
        <begin position="462"/>
        <end position="463"/>
    </location>
</feature>
<feature type="mutagenesis site" description="Reduces palmitoylation." evidence="4">
    <original>C</original>
    <variation>S</variation>
    <location>
        <position position="462"/>
    </location>
</feature>
<feature type="mutagenesis site" description="Reduces palmitoylation." evidence="4">
    <original>C</original>
    <variation>S</variation>
    <location>
        <position position="463"/>
    </location>
</feature>
<comment type="function">
    <text evidence="2 3 4">Oxidizes medium and long chain saturated and unsaturated fatty aldehydes generated in the plasma membrane into non-toxic fatty acids (PubMed:17382292, PubMed:25286108). May have a protective role against the cytotoxicity induced by lipid peroxidation. Short-chain fatty aldehydes are not good substrates. Can use both NADP(+) and NAD(+) as electron acceptor in vitro, however in vivo preference will depend on their tissue levels. Low activity towards acetaldehyde and 3,4-dihydroxyphenylacetaldehyde. Able to metabolize aromatic aldehydes such as benzaldehyde to their acid form (By similarity).</text>
</comment>
<comment type="catalytic activity">
    <reaction evidence="4">
        <text>an aldehyde + NAD(+) + H2O = a carboxylate + NADH + 2 H(+)</text>
        <dbReference type="Rhea" id="RHEA:16185"/>
        <dbReference type="ChEBI" id="CHEBI:15377"/>
        <dbReference type="ChEBI" id="CHEBI:15378"/>
        <dbReference type="ChEBI" id="CHEBI:17478"/>
        <dbReference type="ChEBI" id="CHEBI:29067"/>
        <dbReference type="ChEBI" id="CHEBI:57540"/>
        <dbReference type="ChEBI" id="CHEBI:57945"/>
        <dbReference type="EC" id="1.2.1.5"/>
    </reaction>
    <physiologicalReaction direction="left-to-right" evidence="6">
        <dbReference type="Rhea" id="RHEA:16186"/>
    </physiologicalReaction>
</comment>
<comment type="catalytic activity">
    <reaction evidence="4">
        <text>a long-chain fatty aldehyde + NAD(+) + H2O = a long-chain fatty acid + NADH + 2 H(+)</text>
        <dbReference type="Rhea" id="RHEA:10652"/>
        <dbReference type="ChEBI" id="CHEBI:15377"/>
        <dbReference type="ChEBI" id="CHEBI:15378"/>
        <dbReference type="ChEBI" id="CHEBI:17176"/>
        <dbReference type="ChEBI" id="CHEBI:57540"/>
        <dbReference type="ChEBI" id="CHEBI:57560"/>
        <dbReference type="ChEBI" id="CHEBI:57945"/>
        <dbReference type="EC" id="1.2.1.48"/>
    </reaction>
    <physiologicalReaction direction="left-to-right" evidence="6">
        <dbReference type="Rhea" id="RHEA:10653"/>
    </physiologicalReaction>
</comment>
<comment type="catalytic activity">
    <reaction evidence="4">
        <text>a medium-chain fatty aldehyde + NAD(+) + H2O = a medium-chain fatty acid + NADH + 2 H(+)</text>
        <dbReference type="Rhea" id="RHEA:69763"/>
        <dbReference type="ChEBI" id="CHEBI:15377"/>
        <dbReference type="ChEBI" id="CHEBI:15378"/>
        <dbReference type="ChEBI" id="CHEBI:57540"/>
        <dbReference type="ChEBI" id="CHEBI:57945"/>
        <dbReference type="ChEBI" id="CHEBI:59558"/>
        <dbReference type="ChEBI" id="CHEBI:142621"/>
    </reaction>
    <physiologicalReaction direction="left-to-right" evidence="6">
        <dbReference type="Rhea" id="RHEA:69764"/>
    </physiologicalReaction>
</comment>
<comment type="catalytic activity">
    <reaction evidence="4">
        <text>octanal + NAD(+) + H2O = octanoate + NADH + 2 H(+)</text>
        <dbReference type="Rhea" id="RHEA:44100"/>
        <dbReference type="ChEBI" id="CHEBI:15377"/>
        <dbReference type="ChEBI" id="CHEBI:15378"/>
        <dbReference type="ChEBI" id="CHEBI:17935"/>
        <dbReference type="ChEBI" id="CHEBI:25646"/>
        <dbReference type="ChEBI" id="CHEBI:57540"/>
        <dbReference type="ChEBI" id="CHEBI:57945"/>
    </reaction>
    <physiologicalReaction direction="left-to-right" evidence="6">
        <dbReference type="Rhea" id="RHEA:44101"/>
    </physiologicalReaction>
</comment>
<comment type="catalytic activity">
    <reaction evidence="2">
        <text>nonanal + NAD(+) + H2O = nonanoate + NADH + 2 H(+)</text>
        <dbReference type="Rhea" id="RHEA:69759"/>
        <dbReference type="ChEBI" id="CHEBI:15377"/>
        <dbReference type="ChEBI" id="CHEBI:15378"/>
        <dbReference type="ChEBI" id="CHEBI:32361"/>
        <dbReference type="ChEBI" id="CHEBI:57540"/>
        <dbReference type="ChEBI" id="CHEBI:57945"/>
        <dbReference type="ChEBI" id="CHEBI:84268"/>
    </reaction>
    <physiologicalReaction direction="left-to-right" evidence="2">
        <dbReference type="Rhea" id="RHEA:69760"/>
    </physiologicalReaction>
</comment>
<comment type="catalytic activity">
    <reaction evidence="4">
        <text>hexadecanoate + NADH + 2 H(+) = hexadecanal + NAD(+) + H2O</text>
        <dbReference type="Rhea" id="RHEA:33739"/>
        <dbReference type="ChEBI" id="CHEBI:7896"/>
        <dbReference type="ChEBI" id="CHEBI:15377"/>
        <dbReference type="ChEBI" id="CHEBI:15378"/>
        <dbReference type="ChEBI" id="CHEBI:17600"/>
        <dbReference type="ChEBI" id="CHEBI:57540"/>
        <dbReference type="ChEBI" id="CHEBI:57945"/>
    </reaction>
    <physiologicalReaction direction="left-to-right" evidence="6">
        <dbReference type="Rhea" id="RHEA:33740"/>
    </physiologicalReaction>
</comment>
<comment type="catalytic activity">
    <reaction evidence="2">
        <text>(2E)-octenal + NAD(+) + H2O = (2E)-octenoate + NADH + 2 H(+)</text>
        <dbReference type="Rhea" id="RHEA:59920"/>
        <dbReference type="ChEBI" id="CHEBI:15377"/>
        <dbReference type="ChEBI" id="CHEBI:15378"/>
        <dbReference type="ChEBI" id="CHEBI:57540"/>
        <dbReference type="ChEBI" id="CHEBI:57945"/>
        <dbReference type="ChEBI" id="CHEBI:61748"/>
        <dbReference type="ChEBI" id="CHEBI:143526"/>
    </reaction>
    <physiologicalReaction direction="left-to-right" evidence="2">
        <dbReference type="Rhea" id="RHEA:59921"/>
    </physiologicalReaction>
</comment>
<comment type="catalytic activity">
    <reaction evidence="2">
        <text>(E)-non-2-enal + NAD(+) + H2O = (E)-non-2-enoate + NADH + 2 H(+)</text>
        <dbReference type="Rhea" id="RHEA:69767"/>
        <dbReference type="ChEBI" id="CHEBI:15377"/>
        <dbReference type="ChEBI" id="CHEBI:15378"/>
        <dbReference type="ChEBI" id="CHEBI:57540"/>
        <dbReference type="ChEBI" id="CHEBI:57945"/>
        <dbReference type="ChEBI" id="CHEBI:142592"/>
        <dbReference type="ChEBI" id="CHEBI:143908"/>
    </reaction>
    <physiologicalReaction direction="left-to-right" evidence="2">
        <dbReference type="Rhea" id="RHEA:69768"/>
    </physiologicalReaction>
</comment>
<comment type="catalytic activity">
    <reaction evidence="2">
        <text>(E)-4-hydroxynon-2-enal + NAD(+) + H2O = (E)-4-hydroxynon-2-enoate + NADH + 2 H(+)</text>
        <dbReference type="Rhea" id="RHEA:67248"/>
        <dbReference type="ChEBI" id="CHEBI:15377"/>
        <dbReference type="ChEBI" id="CHEBI:15378"/>
        <dbReference type="ChEBI" id="CHEBI:57540"/>
        <dbReference type="ChEBI" id="CHEBI:57945"/>
        <dbReference type="ChEBI" id="CHEBI:58968"/>
        <dbReference type="ChEBI" id="CHEBI:142920"/>
    </reaction>
    <physiologicalReaction direction="left-to-right" evidence="2">
        <dbReference type="Rhea" id="RHEA:67249"/>
    </physiologicalReaction>
</comment>
<comment type="catalytic activity">
    <reaction evidence="2">
        <text>(2E)-hexadecenal + NAD(+) + H2O = (E)-hexadec-2-enoate + NADH + 2 H(+)</text>
        <dbReference type="Rhea" id="RHEA:36135"/>
        <dbReference type="ChEBI" id="CHEBI:15377"/>
        <dbReference type="ChEBI" id="CHEBI:15378"/>
        <dbReference type="ChEBI" id="CHEBI:17585"/>
        <dbReference type="ChEBI" id="CHEBI:57540"/>
        <dbReference type="ChEBI" id="CHEBI:57945"/>
        <dbReference type="ChEBI" id="CHEBI:72745"/>
    </reaction>
    <physiologicalReaction direction="left-to-right" evidence="2">
        <dbReference type="Rhea" id="RHEA:36136"/>
    </physiologicalReaction>
</comment>
<comment type="catalytic activity">
    <reaction evidence="2">
        <text>benzaldehyde + NAD(+) + H2O = benzoate + NADH + 2 H(+)</text>
        <dbReference type="Rhea" id="RHEA:11840"/>
        <dbReference type="ChEBI" id="CHEBI:15377"/>
        <dbReference type="ChEBI" id="CHEBI:15378"/>
        <dbReference type="ChEBI" id="CHEBI:16150"/>
        <dbReference type="ChEBI" id="CHEBI:17169"/>
        <dbReference type="ChEBI" id="CHEBI:57540"/>
        <dbReference type="ChEBI" id="CHEBI:57945"/>
        <dbReference type="EC" id="1.2.1.28"/>
    </reaction>
    <physiologicalReaction direction="left-to-right" evidence="2">
        <dbReference type="Rhea" id="RHEA:11841"/>
    </physiologicalReaction>
</comment>
<comment type="catalytic activity">
    <reaction evidence="2">
        <text>an aldehyde + NADP(+) + H2O = a carboxylate + NADPH + 2 H(+)</text>
        <dbReference type="Rhea" id="RHEA:11888"/>
        <dbReference type="ChEBI" id="CHEBI:15377"/>
        <dbReference type="ChEBI" id="CHEBI:15378"/>
        <dbReference type="ChEBI" id="CHEBI:17478"/>
        <dbReference type="ChEBI" id="CHEBI:29067"/>
        <dbReference type="ChEBI" id="CHEBI:57783"/>
        <dbReference type="ChEBI" id="CHEBI:58349"/>
        <dbReference type="EC" id="1.2.1.5"/>
    </reaction>
    <physiologicalReaction direction="left-to-right" evidence="2">
        <dbReference type="Rhea" id="RHEA:11889"/>
    </physiologicalReaction>
</comment>
<comment type="catalytic activity">
    <reaction evidence="2">
        <text>a medium-chain fatty aldehyde + NADP(+) + H2O = a medium-chain fatty acid + NADPH + 2 H(+)</text>
        <dbReference type="Rhea" id="RHEA:80815"/>
        <dbReference type="ChEBI" id="CHEBI:15377"/>
        <dbReference type="ChEBI" id="CHEBI:15378"/>
        <dbReference type="ChEBI" id="CHEBI:57783"/>
        <dbReference type="ChEBI" id="CHEBI:58349"/>
        <dbReference type="ChEBI" id="CHEBI:59558"/>
        <dbReference type="ChEBI" id="CHEBI:142621"/>
    </reaction>
    <physiologicalReaction direction="left-to-right" evidence="2">
        <dbReference type="Rhea" id="RHEA:80816"/>
    </physiologicalReaction>
</comment>
<comment type="catalytic activity">
    <reaction evidence="2">
        <text>hexanal + NADP(+) + H2O = hexanoate + NADPH + 2 H(+)</text>
        <dbReference type="Rhea" id="RHEA:59908"/>
        <dbReference type="ChEBI" id="CHEBI:15377"/>
        <dbReference type="ChEBI" id="CHEBI:15378"/>
        <dbReference type="ChEBI" id="CHEBI:17120"/>
        <dbReference type="ChEBI" id="CHEBI:57783"/>
        <dbReference type="ChEBI" id="CHEBI:58349"/>
        <dbReference type="ChEBI" id="CHEBI:88528"/>
    </reaction>
    <physiologicalReaction direction="left-to-right" evidence="2">
        <dbReference type="Rhea" id="RHEA:59909"/>
    </physiologicalReaction>
</comment>
<comment type="catalytic activity">
    <reaction evidence="2">
        <text>octanal + NADP(+) + H2O = octanoate + NADPH + 2 H(+)</text>
        <dbReference type="Rhea" id="RHEA:59904"/>
        <dbReference type="ChEBI" id="CHEBI:15377"/>
        <dbReference type="ChEBI" id="CHEBI:15378"/>
        <dbReference type="ChEBI" id="CHEBI:17935"/>
        <dbReference type="ChEBI" id="CHEBI:25646"/>
        <dbReference type="ChEBI" id="CHEBI:57783"/>
        <dbReference type="ChEBI" id="CHEBI:58349"/>
    </reaction>
    <physiologicalReaction direction="left-to-right" evidence="2">
        <dbReference type="Rhea" id="RHEA:59905"/>
    </physiologicalReaction>
</comment>
<comment type="catalytic activity">
    <reaction evidence="2">
        <text>nonanal + NADP(+) + H2O = nonanoate + NADPH + 2 H(+)</text>
        <dbReference type="Rhea" id="RHEA:80819"/>
        <dbReference type="ChEBI" id="CHEBI:15377"/>
        <dbReference type="ChEBI" id="CHEBI:15378"/>
        <dbReference type="ChEBI" id="CHEBI:32361"/>
        <dbReference type="ChEBI" id="CHEBI:57783"/>
        <dbReference type="ChEBI" id="CHEBI:58349"/>
        <dbReference type="ChEBI" id="CHEBI:84268"/>
    </reaction>
    <physiologicalReaction direction="left-to-right" evidence="2">
        <dbReference type="Rhea" id="RHEA:80820"/>
    </physiologicalReaction>
</comment>
<comment type="catalytic activity">
    <reaction evidence="2">
        <text>(2E)-octenal + NADP(+) + H2O = (2E)-octenoate + NADPH + 2 H(+)</text>
        <dbReference type="Rhea" id="RHEA:59916"/>
        <dbReference type="ChEBI" id="CHEBI:15377"/>
        <dbReference type="ChEBI" id="CHEBI:15378"/>
        <dbReference type="ChEBI" id="CHEBI:57783"/>
        <dbReference type="ChEBI" id="CHEBI:58349"/>
        <dbReference type="ChEBI" id="CHEBI:61748"/>
        <dbReference type="ChEBI" id="CHEBI:143526"/>
    </reaction>
    <physiologicalReaction direction="left-to-right" evidence="2">
        <dbReference type="Rhea" id="RHEA:59917"/>
    </physiologicalReaction>
</comment>
<comment type="catalytic activity">
    <reaction evidence="2">
        <text>(E)-non-2-enal + NADP(+) + H2O = (E)-non-2-enoate + NADPH + 2 H(+)</text>
        <dbReference type="Rhea" id="RHEA:60692"/>
        <dbReference type="ChEBI" id="CHEBI:15377"/>
        <dbReference type="ChEBI" id="CHEBI:15378"/>
        <dbReference type="ChEBI" id="CHEBI:57783"/>
        <dbReference type="ChEBI" id="CHEBI:58349"/>
        <dbReference type="ChEBI" id="CHEBI:142592"/>
        <dbReference type="ChEBI" id="CHEBI:143908"/>
    </reaction>
    <physiologicalReaction direction="left-to-right" evidence="2">
        <dbReference type="Rhea" id="RHEA:60693"/>
    </physiologicalReaction>
</comment>
<comment type="catalytic activity">
    <reaction evidence="2">
        <text>(E)-4-hydroxynon-2-enal + NADP(+) + H2O = (E)-4-hydroxynon-2-enoate + NADPH + 2 H(+)</text>
        <dbReference type="Rhea" id="RHEA:59912"/>
        <dbReference type="ChEBI" id="CHEBI:15377"/>
        <dbReference type="ChEBI" id="CHEBI:15378"/>
        <dbReference type="ChEBI" id="CHEBI:57783"/>
        <dbReference type="ChEBI" id="CHEBI:58349"/>
        <dbReference type="ChEBI" id="CHEBI:58968"/>
        <dbReference type="ChEBI" id="CHEBI:142920"/>
    </reaction>
    <physiologicalReaction direction="left-to-right" evidence="2">
        <dbReference type="Rhea" id="RHEA:59913"/>
    </physiologicalReaction>
</comment>
<comment type="catalytic activity">
    <reaction evidence="2">
        <text>benzaldehyde + NADP(+) + H2O = benzoate + NADPH + 2 H(+)</text>
        <dbReference type="Rhea" id="RHEA:21660"/>
        <dbReference type="ChEBI" id="CHEBI:15377"/>
        <dbReference type="ChEBI" id="CHEBI:15378"/>
        <dbReference type="ChEBI" id="CHEBI:16150"/>
        <dbReference type="ChEBI" id="CHEBI:17169"/>
        <dbReference type="ChEBI" id="CHEBI:57783"/>
        <dbReference type="ChEBI" id="CHEBI:58349"/>
        <dbReference type="EC" id="1.2.1.7"/>
    </reaction>
    <physiologicalReaction direction="left-to-right" evidence="2">
        <dbReference type="Rhea" id="RHEA:21661"/>
    </physiologicalReaction>
</comment>
<comment type="pathway">
    <text>Alcohol metabolism; ethanol degradation; acetate from ethanol: step 2/2.</text>
</comment>
<comment type="subcellular location">
    <subcellularLocation>
        <location evidence="4">Cell membrane</location>
        <topology evidence="4">Lipid-anchor</topology>
    </subcellularLocation>
    <text evidence="4">Primarily in the plasma membrane as well as in some punctate structures in the cytoplasm.</text>
</comment>
<comment type="tissue specificity">
    <text evidence="3">Highly expressed in kidney and liver. In brain is expressed at moderate levels in cortex, striatum and hippocampus, and at lower levels in brainstem and cerebellum.</text>
</comment>
<comment type="PTM">
    <text evidence="4">Dually lipidated in the C-terminus; prenylation occurs prior to, and is a prerequisite for palmitoylation. It is also required for activity towards long-chain substrates.</text>
</comment>
<comment type="similarity">
    <text evidence="5">Belongs to the aldehyde dehydrogenase family.</text>
</comment>
<sequence>MDSFEDKLQQLREAFKEGRTRSAEFRAAQLQGLSHFLRDNKQQLQEALAQDLHKSAFEAEVSEIAISQAEVDLALRNLRSWMKDEKVSKNLATQLDSAFIRKEPFGLVLIIVPWNYPINLTLVPLVGAIAAGNCVVLKPSEISKATEKILAEVLPRYLDQSCFTVVLGGRQETGQLLEHKFDYIFFTGNAYVGKIVMAAAAKHLTPITLELGGKNPCYVDDNCDPQIVANRVAWFRYFNAGQTCVAPDYILCSQEMQERLVPALQNAITRFYGDNPQTSPNLGRIINQKHFKRLQGLLGCGRVAIGGQSDEGERYIAPTVLVDVQETEPVMQEEIFGPILPLVTVRSLDEAIEFMNRREKPLALYAFSKRSQVIKQVLARTSSGGFCGNDGFMHMTLSSLPFGGVGTSGMGRYHGKFSFDTFSNQRACLLRSPGMEKINDLRYPPYSSRNLRVLLVAMEERCCSCTLL</sequence>
<proteinExistence type="evidence at protein level"/>
<protein>
    <recommendedName>
        <fullName>Aldehyde dehydrogenase family 3 member B1</fullName>
        <ecNumber evidence="2">1.2.1.28</ecNumber>
        <ecNumber evidence="4">1.2.1.5</ecNumber>
        <ecNumber evidence="2">1.2.1.7</ecNumber>
    </recommendedName>
    <alternativeName>
        <fullName>Aldehyde dehydrogenase 7</fullName>
    </alternativeName>
    <alternativeName>
        <fullName>Long-chain fatty aldehyde dehydrogenase</fullName>
        <ecNumber evidence="2">1.2.1.48</ecNumber>
    </alternativeName>
    <alternativeName>
        <fullName>Medium-chain fatty aldehyde dehydrogenase</fullName>
    </alternativeName>
</protein>
<keyword id="KW-0007">Acetylation</keyword>
<keyword id="KW-1003">Cell membrane</keyword>
<keyword id="KW-0443">Lipid metabolism</keyword>
<keyword id="KW-0449">Lipoprotein</keyword>
<keyword id="KW-0472">Membrane</keyword>
<keyword id="KW-0488">Methylation</keyword>
<keyword id="KW-0520">NAD</keyword>
<keyword id="KW-0560">Oxidoreductase</keyword>
<keyword id="KW-0564">Palmitate</keyword>
<keyword id="KW-0636">Prenylation</keyword>
<keyword id="KW-1185">Reference proteome</keyword>
<accession>Q80VQ0</accession>
<accession>Q63ZW3</accession>
<accession>Q8VHW0</accession>
<accession>Q9CW05</accession>
<dbReference type="EC" id="1.2.1.28" evidence="2"/>
<dbReference type="EC" id="1.2.1.5" evidence="4"/>
<dbReference type="EC" id="1.2.1.7" evidence="2"/>
<dbReference type="EC" id="1.2.1.48" evidence="2"/>
<dbReference type="EMBL" id="BC046597">
    <property type="protein sequence ID" value="AAH46597.1"/>
    <property type="molecule type" value="mRNA"/>
</dbReference>
<dbReference type="EMBL" id="BC082792">
    <property type="protein sequence ID" value="AAH82792.1"/>
    <property type="molecule type" value="mRNA"/>
</dbReference>
<dbReference type="EMBL" id="AF362571">
    <property type="protein sequence ID" value="AAL56246.1"/>
    <property type="molecule type" value="mRNA"/>
</dbReference>
<dbReference type="EMBL" id="AK005615">
    <property type="protein sequence ID" value="BAB24152.2"/>
    <property type="molecule type" value="mRNA"/>
</dbReference>
<dbReference type="CCDS" id="CCDS29403.1"/>
<dbReference type="RefSeq" id="NP_080592.2">
    <property type="nucleotide sequence ID" value="NM_026316.2"/>
</dbReference>
<dbReference type="RefSeq" id="XP_006531893.1">
    <property type="nucleotide sequence ID" value="XM_006531830.4"/>
</dbReference>
<dbReference type="SMR" id="Q80VQ0"/>
<dbReference type="BioGRID" id="212369">
    <property type="interactions" value="2"/>
</dbReference>
<dbReference type="FunCoup" id="Q80VQ0">
    <property type="interactions" value="939"/>
</dbReference>
<dbReference type="IntAct" id="Q80VQ0">
    <property type="interactions" value="1"/>
</dbReference>
<dbReference type="STRING" id="10090.ENSMUSP00000056276"/>
<dbReference type="SwissLipids" id="SLP:000001742"/>
<dbReference type="iPTMnet" id="Q80VQ0"/>
<dbReference type="PhosphoSitePlus" id="Q80VQ0"/>
<dbReference type="SwissPalm" id="Q80VQ0"/>
<dbReference type="jPOST" id="Q80VQ0"/>
<dbReference type="PaxDb" id="10090-ENSMUSP00000056276"/>
<dbReference type="ProteomicsDB" id="282069"/>
<dbReference type="Pumba" id="Q80VQ0"/>
<dbReference type="Antibodypedia" id="30512">
    <property type="antibodies" value="278 antibodies from 31 providers"/>
</dbReference>
<dbReference type="DNASU" id="67689"/>
<dbReference type="Ensembl" id="ENSMUST00000051803.8">
    <property type="protein sequence ID" value="ENSMUSP00000056276.7"/>
    <property type="gene ID" value="ENSMUSG00000024885.10"/>
</dbReference>
<dbReference type="GeneID" id="67689"/>
<dbReference type="KEGG" id="mmu:67689"/>
<dbReference type="UCSC" id="uc008fxq.1">
    <property type="organism name" value="mouse"/>
</dbReference>
<dbReference type="AGR" id="MGI:1914939"/>
<dbReference type="CTD" id="221"/>
<dbReference type="MGI" id="MGI:1914939">
    <property type="gene designation" value="Aldh3b1"/>
</dbReference>
<dbReference type="VEuPathDB" id="HostDB:ENSMUSG00000024885"/>
<dbReference type="eggNOG" id="KOG2456">
    <property type="taxonomic scope" value="Eukaryota"/>
</dbReference>
<dbReference type="GeneTree" id="ENSGT00940000162915"/>
<dbReference type="HOGENOM" id="CLU_005391_3_1_1"/>
<dbReference type="InParanoid" id="Q80VQ0"/>
<dbReference type="OMA" id="MKDQKVP"/>
<dbReference type="OrthoDB" id="440325at2759"/>
<dbReference type="PhylomeDB" id="Q80VQ0"/>
<dbReference type="TreeFam" id="TF314264"/>
<dbReference type="BRENDA" id="1.2.1.5">
    <property type="organism ID" value="3474"/>
</dbReference>
<dbReference type="Reactome" id="R-MMU-6798695">
    <property type="pathway name" value="Neutrophil degranulation"/>
</dbReference>
<dbReference type="Reactome" id="R-MMU-9845614">
    <property type="pathway name" value="Sphingolipid catabolism"/>
</dbReference>
<dbReference type="UniPathway" id="UPA00780">
    <property type="reaction ID" value="UER00768"/>
</dbReference>
<dbReference type="BioGRID-ORCS" id="67689">
    <property type="hits" value="3 hits in 81 CRISPR screens"/>
</dbReference>
<dbReference type="PRO" id="PR:Q80VQ0"/>
<dbReference type="Proteomes" id="UP000000589">
    <property type="component" value="Chromosome 19"/>
</dbReference>
<dbReference type="RNAct" id="Q80VQ0">
    <property type="molecule type" value="protein"/>
</dbReference>
<dbReference type="Bgee" id="ENSMUSG00000024885">
    <property type="expression patterns" value="Expressed in granulocyte and 90 other cell types or tissues"/>
</dbReference>
<dbReference type="ExpressionAtlas" id="Q80VQ0">
    <property type="expression patterns" value="baseline and differential"/>
</dbReference>
<dbReference type="GO" id="GO:0005737">
    <property type="term" value="C:cytoplasm"/>
    <property type="evidence" value="ECO:0000314"/>
    <property type="project" value="MGI"/>
</dbReference>
<dbReference type="GO" id="GO:0005829">
    <property type="term" value="C:cytosol"/>
    <property type="evidence" value="ECO:0000314"/>
    <property type="project" value="MGI"/>
</dbReference>
<dbReference type="GO" id="GO:0005886">
    <property type="term" value="C:plasma membrane"/>
    <property type="evidence" value="ECO:0000314"/>
    <property type="project" value="MGI"/>
</dbReference>
<dbReference type="GO" id="GO:0004029">
    <property type="term" value="F:aldehyde dehydrogenase (NAD+) activity"/>
    <property type="evidence" value="ECO:0000314"/>
    <property type="project" value="MGI"/>
</dbReference>
<dbReference type="GO" id="GO:0004030">
    <property type="term" value="F:aldehyde dehydrogenase [NAD(P)+] activity"/>
    <property type="evidence" value="ECO:0000266"/>
    <property type="project" value="MGI"/>
</dbReference>
<dbReference type="GO" id="GO:0018479">
    <property type="term" value="F:benzaldehyde dehydrogenase (NAD+) activity"/>
    <property type="evidence" value="ECO:0007669"/>
    <property type="project" value="UniProtKB-EC"/>
</dbReference>
<dbReference type="GO" id="GO:0018477">
    <property type="term" value="F:benzaldehyde dehydrogenase (NADP+) activity"/>
    <property type="evidence" value="ECO:0007669"/>
    <property type="project" value="UniProtKB-EC"/>
</dbReference>
<dbReference type="GO" id="GO:0050061">
    <property type="term" value="F:long-chain fatty aldehyde dehydrogenase (NAD+) activity"/>
    <property type="evidence" value="ECO:0007669"/>
    <property type="project" value="RHEA"/>
</dbReference>
<dbReference type="GO" id="GO:0052814">
    <property type="term" value="F:medium-chain fatty aldehyde dehydrogenase (NAD+) activity"/>
    <property type="evidence" value="ECO:0007669"/>
    <property type="project" value="RHEA"/>
</dbReference>
<dbReference type="GO" id="GO:0046185">
    <property type="term" value="P:aldehyde catabolic process"/>
    <property type="evidence" value="ECO:0000266"/>
    <property type="project" value="MGI"/>
</dbReference>
<dbReference type="GO" id="GO:0006081">
    <property type="term" value="P:aldehyde metabolic process"/>
    <property type="evidence" value="ECO:0000305"/>
    <property type="project" value="MGI"/>
</dbReference>
<dbReference type="GO" id="GO:0034599">
    <property type="term" value="P:cellular response to oxidative stress"/>
    <property type="evidence" value="ECO:0000266"/>
    <property type="project" value="MGI"/>
</dbReference>
<dbReference type="GO" id="GO:0006068">
    <property type="term" value="P:ethanol catabolic process"/>
    <property type="evidence" value="ECO:0007669"/>
    <property type="project" value="UniProtKB-UniPathway"/>
</dbReference>
<dbReference type="GO" id="GO:0006629">
    <property type="term" value="P:lipid metabolic process"/>
    <property type="evidence" value="ECO:0007669"/>
    <property type="project" value="UniProtKB-KW"/>
</dbReference>
<dbReference type="GO" id="GO:0006979">
    <property type="term" value="P:response to oxidative stress"/>
    <property type="evidence" value="ECO:0000266"/>
    <property type="project" value="MGI"/>
</dbReference>
<dbReference type="CDD" id="cd07132">
    <property type="entry name" value="ALDH_F3AB"/>
    <property type="match status" value="1"/>
</dbReference>
<dbReference type="FunFam" id="3.40.309.10:FF:000003">
    <property type="entry name" value="Aldehyde dehydrogenase"/>
    <property type="match status" value="1"/>
</dbReference>
<dbReference type="FunFam" id="3.40.605.10:FF:000004">
    <property type="entry name" value="Aldehyde dehydrogenase"/>
    <property type="match status" value="1"/>
</dbReference>
<dbReference type="Gene3D" id="3.40.605.10">
    <property type="entry name" value="Aldehyde Dehydrogenase, Chain A, domain 1"/>
    <property type="match status" value="1"/>
</dbReference>
<dbReference type="Gene3D" id="3.40.309.10">
    <property type="entry name" value="Aldehyde Dehydrogenase, Chain A, domain 2"/>
    <property type="match status" value="1"/>
</dbReference>
<dbReference type="InterPro" id="IPR016161">
    <property type="entry name" value="Ald_DH/histidinol_DH"/>
</dbReference>
<dbReference type="InterPro" id="IPR016163">
    <property type="entry name" value="Ald_DH_C"/>
</dbReference>
<dbReference type="InterPro" id="IPR016160">
    <property type="entry name" value="Ald_DH_CS_CYS"/>
</dbReference>
<dbReference type="InterPro" id="IPR029510">
    <property type="entry name" value="Ald_DH_CS_GLU"/>
</dbReference>
<dbReference type="InterPro" id="IPR016162">
    <property type="entry name" value="Ald_DH_N"/>
</dbReference>
<dbReference type="InterPro" id="IPR015590">
    <property type="entry name" value="Aldehyde_DH_dom"/>
</dbReference>
<dbReference type="InterPro" id="IPR012394">
    <property type="entry name" value="Aldehyde_DH_NAD(P)"/>
</dbReference>
<dbReference type="PANTHER" id="PTHR43570">
    <property type="entry name" value="ALDEHYDE DEHYDROGENASE"/>
    <property type="match status" value="1"/>
</dbReference>
<dbReference type="PANTHER" id="PTHR43570:SF2">
    <property type="entry name" value="ALDEHYDE DEHYDROGENASE FAMILY 3 MEMBER B1"/>
    <property type="match status" value="1"/>
</dbReference>
<dbReference type="Pfam" id="PF00171">
    <property type="entry name" value="Aldedh"/>
    <property type="match status" value="1"/>
</dbReference>
<dbReference type="PIRSF" id="PIRSF036492">
    <property type="entry name" value="ALDH"/>
    <property type="match status" value="1"/>
</dbReference>
<dbReference type="SUPFAM" id="SSF53720">
    <property type="entry name" value="ALDH-like"/>
    <property type="match status" value="1"/>
</dbReference>
<dbReference type="PROSITE" id="PS00070">
    <property type="entry name" value="ALDEHYDE_DEHYDR_CYS"/>
    <property type="match status" value="1"/>
</dbReference>
<dbReference type="PROSITE" id="PS00687">
    <property type="entry name" value="ALDEHYDE_DEHYDR_GLU"/>
    <property type="match status" value="1"/>
</dbReference>
<organism>
    <name type="scientific">Mus musculus</name>
    <name type="common">Mouse</name>
    <dbReference type="NCBI Taxonomy" id="10090"/>
    <lineage>
        <taxon>Eukaryota</taxon>
        <taxon>Metazoa</taxon>
        <taxon>Chordata</taxon>
        <taxon>Craniata</taxon>
        <taxon>Vertebrata</taxon>
        <taxon>Euteleostomi</taxon>
        <taxon>Mammalia</taxon>
        <taxon>Eutheria</taxon>
        <taxon>Euarchontoglires</taxon>
        <taxon>Glires</taxon>
        <taxon>Rodentia</taxon>
        <taxon>Myomorpha</taxon>
        <taxon>Muroidea</taxon>
        <taxon>Muridae</taxon>
        <taxon>Murinae</taxon>
        <taxon>Mus</taxon>
        <taxon>Mus</taxon>
    </lineage>
</organism>
<evidence type="ECO:0000250" key="1"/>
<evidence type="ECO:0000250" key="2">
    <source>
        <dbReference type="UniProtKB" id="P43353"/>
    </source>
</evidence>
<evidence type="ECO:0000269" key="3">
    <source>
    </source>
</evidence>
<evidence type="ECO:0000269" key="4">
    <source>
    </source>
</evidence>
<evidence type="ECO:0000305" key="5"/>
<evidence type="ECO:0000305" key="6">
    <source>
    </source>
</evidence>